<proteinExistence type="inferred from homology"/>
<gene>
    <name evidence="1" type="primary">moaC</name>
    <name type="ordered locus">ABO_1277</name>
</gene>
<feature type="chain" id="PRO_1000139240" description="Cyclic pyranopterin monophosphate synthase">
    <location>
        <begin position="1"/>
        <end position="160"/>
    </location>
</feature>
<feature type="active site" evidence="1">
    <location>
        <position position="129"/>
    </location>
</feature>
<feature type="binding site" evidence="1">
    <location>
        <begin position="77"/>
        <end position="79"/>
    </location>
    <ligand>
        <name>substrate</name>
    </ligand>
</feature>
<feature type="binding site" evidence="1">
    <location>
        <begin position="114"/>
        <end position="115"/>
    </location>
    <ligand>
        <name>substrate</name>
    </ligand>
</feature>
<reference key="1">
    <citation type="journal article" date="2006" name="Nat. Biotechnol.">
        <title>Genome sequence of the ubiquitous hydrocarbon-degrading marine bacterium Alcanivorax borkumensis.</title>
        <authorList>
            <person name="Schneiker S."/>
            <person name="Martins dos Santos V.A.P."/>
            <person name="Bartels D."/>
            <person name="Bekel T."/>
            <person name="Brecht M."/>
            <person name="Buhrmester J."/>
            <person name="Chernikova T.N."/>
            <person name="Denaro R."/>
            <person name="Ferrer M."/>
            <person name="Gertler C."/>
            <person name="Goesmann A."/>
            <person name="Golyshina O.V."/>
            <person name="Kaminski F."/>
            <person name="Khachane A.N."/>
            <person name="Lang S."/>
            <person name="Linke B."/>
            <person name="McHardy A.C."/>
            <person name="Meyer F."/>
            <person name="Nechitaylo T."/>
            <person name="Puehler A."/>
            <person name="Regenhardt D."/>
            <person name="Rupp O."/>
            <person name="Sabirova J.S."/>
            <person name="Selbitschka W."/>
            <person name="Yakimov M.M."/>
            <person name="Timmis K.N."/>
            <person name="Vorhoelter F.-J."/>
            <person name="Weidner S."/>
            <person name="Kaiser O."/>
            <person name="Golyshin P.N."/>
        </authorList>
    </citation>
    <scope>NUCLEOTIDE SEQUENCE [LARGE SCALE GENOMIC DNA]</scope>
    <source>
        <strain>ATCC 700651 / DSM 11573 / NCIMB 13689 / SK2</strain>
    </source>
</reference>
<name>MOAC_ALCBS</name>
<accession>Q0VQ23</accession>
<dbReference type="EC" id="4.6.1.17" evidence="1"/>
<dbReference type="EMBL" id="AM286690">
    <property type="protein sequence ID" value="CAL16725.1"/>
    <property type="molecule type" value="Genomic_DNA"/>
</dbReference>
<dbReference type="RefSeq" id="WP_011588560.1">
    <property type="nucleotide sequence ID" value="NC_008260.1"/>
</dbReference>
<dbReference type="SMR" id="Q0VQ23"/>
<dbReference type="STRING" id="393595.ABO_1277"/>
<dbReference type="KEGG" id="abo:ABO_1277"/>
<dbReference type="eggNOG" id="COG0315">
    <property type="taxonomic scope" value="Bacteria"/>
</dbReference>
<dbReference type="HOGENOM" id="CLU_074693_1_1_6"/>
<dbReference type="OrthoDB" id="9794429at2"/>
<dbReference type="UniPathway" id="UPA00344"/>
<dbReference type="Proteomes" id="UP000008871">
    <property type="component" value="Chromosome"/>
</dbReference>
<dbReference type="GO" id="GO:0061799">
    <property type="term" value="F:cyclic pyranopterin monophosphate synthase activity"/>
    <property type="evidence" value="ECO:0007669"/>
    <property type="project" value="UniProtKB-UniRule"/>
</dbReference>
<dbReference type="GO" id="GO:0006777">
    <property type="term" value="P:Mo-molybdopterin cofactor biosynthetic process"/>
    <property type="evidence" value="ECO:0007669"/>
    <property type="project" value="UniProtKB-UniRule"/>
</dbReference>
<dbReference type="CDD" id="cd01420">
    <property type="entry name" value="MoaC_PE"/>
    <property type="match status" value="1"/>
</dbReference>
<dbReference type="FunFam" id="3.30.70.640:FF:000001">
    <property type="entry name" value="Cyclic pyranopterin monophosphate synthase"/>
    <property type="match status" value="1"/>
</dbReference>
<dbReference type="Gene3D" id="3.30.70.640">
    <property type="entry name" value="Molybdopterin cofactor biosynthesis C (MoaC) domain"/>
    <property type="match status" value="1"/>
</dbReference>
<dbReference type="HAMAP" id="MF_01224_B">
    <property type="entry name" value="MoaC_B"/>
    <property type="match status" value="1"/>
</dbReference>
<dbReference type="InterPro" id="IPR023045">
    <property type="entry name" value="MoaC"/>
</dbReference>
<dbReference type="InterPro" id="IPR047594">
    <property type="entry name" value="MoaC_bact/euk"/>
</dbReference>
<dbReference type="InterPro" id="IPR036522">
    <property type="entry name" value="MoaC_sf"/>
</dbReference>
<dbReference type="InterPro" id="IPR050105">
    <property type="entry name" value="MoCo_biosynth_MoaA/MoaC"/>
</dbReference>
<dbReference type="InterPro" id="IPR002820">
    <property type="entry name" value="Mopterin_CF_biosynth-C_dom"/>
</dbReference>
<dbReference type="NCBIfam" id="TIGR00581">
    <property type="entry name" value="moaC"/>
    <property type="match status" value="1"/>
</dbReference>
<dbReference type="NCBIfam" id="NF006870">
    <property type="entry name" value="PRK09364.1"/>
    <property type="match status" value="1"/>
</dbReference>
<dbReference type="PANTHER" id="PTHR22960:SF29">
    <property type="entry name" value="CYCLIC PYRANOPTERIN MONOPHOSPHATE SYNTHASE"/>
    <property type="match status" value="1"/>
</dbReference>
<dbReference type="PANTHER" id="PTHR22960">
    <property type="entry name" value="MOLYBDOPTERIN COFACTOR SYNTHESIS PROTEIN A"/>
    <property type="match status" value="1"/>
</dbReference>
<dbReference type="Pfam" id="PF01967">
    <property type="entry name" value="MoaC"/>
    <property type="match status" value="1"/>
</dbReference>
<dbReference type="SUPFAM" id="SSF55040">
    <property type="entry name" value="Molybdenum cofactor biosynthesis protein C, MoaC"/>
    <property type="match status" value="1"/>
</dbReference>
<organism>
    <name type="scientific">Alcanivorax borkumensis (strain ATCC 700651 / DSM 11573 / NCIMB 13689 / SK2)</name>
    <dbReference type="NCBI Taxonomy" id="393595"/>
    <lineage>
        <taxon>Bacteria</taxon>
        <taxon>Pseudomonadati</taxon>
        <taxon>Pseudomonadota</taxon>
        <taxon>Gammaproteobacteria</taxon>
        <taxon>Oceanospirillales</taxon>
        <taxon>Alcanivoracaceae</taxon>
        <taxon>Alcanivorax</taxon>
    </lineage>
</organism>
<comment type="function">
    <text evidence="1">Catalyzes the conversion of (8S)-3',8-cyclo-7,8-dihydroguanosine 5'-triphosphate to cyclic pyranopterin monophosphate (cPMP).</text>
</comment>
<comment type="catalytic activity">
    <reaction evidence="1">
        <text>(8S)-3',8-cyclo-7,8-dihydroguanosine 5'-triphosphate = cyclic pyranopterin phosphate + diphosphate</text>
        <dbReference type="Rhea" id="RHEA:49580"/>
        <dbReference type="ChEBI" id="CHEBI:33019"/>
        <dbReference type="ChEBI" id="CHEBI:59648"/>
        <dbReference type="ChEBI" id="CHEBI:131766"/>
        <dbReference type="EC" id="4.6.1.17"/>
    </reaction>
</comment>
<comment type="pathway">
    <text evidence="1">Cofactor biosynthesis; molybdopterin biosynthesis.</text>
</comment>
<comment type="subunit">
    <text evidence="1">Homohexamer; trimer of dimers.</text>
</comment>
<comment type="similarity">
    <text evidence="1">Belongs to the MoaC family.</text>
</comment>
<evidence type="ECO:0000255" key="1">
    <source>
        <dbReference type="HAMAP-Rule" id="MF_01224"/>
    </source>
</evidence>
<sequence>MTEQRFTHLDDSGRAQMVDVTDKDITQRAATAQARVRMQPSTLQMILAGEHPKGDVLATARIAGIQAAKKTWDLIPLCHPLLLTGITVTIEPEADDALCVQATCKLKGTTGVEMEALTAASVACLTLYDMCKAVDRCMVIESVCLLEKSGGRSGTFRRER</sequence>
<protein>
    <recommendedName>
        <fullName evidence="1">Cyclic pyranopterin monophosphate synthase</fullName>
        <ecNumber evidence="1">4.6.1.17</ecNumber>
    </recommendedName>
    <alternativeName>
        <fullName evidence="1">Molybdenum cofactor biosynthesis protein C</fullName>
    </alternativeName>
</protein>
<keyword id="KW-0456">Lyase</keyword>
<keyword id="KW-0501">Molybdenum cofactor biosynthesis</keyword>
<keyword id="KW-1185">Reference proteome</keyword>